<dbReference type="EMBL" id="AC016041">
    <property type="protein sequence ID" value="AAF69715.1"/>
    <property type="molecule type" value="Genomic_DNA"/>
</dbReference>
<dbReference type="EMBL" id="CP002684">
    <property type="protein sequence ID" value="AEE32383.1"/>
    <property type="molecule type" value="Genomic_DNA"/>
</dbReference>
<dbReference type="EMBL" id="BT010928">
    <property type="protein sequence ID" value="AAR24706.1"/>
    <property type="molecule type" value="mRNA"/>
</dbReference>
<dbReference type="EMBL" id="BT011646">
    <property type="protein sequence ID" value="AAS47652.1"/>
    <property type="molecule type" value="mRNA"/>
</dbReference>
<dbReference type="PIR" id="G96527">
    <property type="entry name" value="G96527"/>
</dbReference>
<dbReference type="RefSeq" id="NP_175332.1">
    <property type="nucleotide sequence ID" value="NM_103796.4"/>
</dbReference>
<dbReference type="BioGRID" id="26551">
    <property type="interactions" value="4"/>
</dbReference>
<dbReference type="FunCoup" id="Q9M9A5">
    <property type="interactions" value="39"/>
</dbReference>
<dbReference type="IntAct" id="Q9M9A5">
    <property type="interactions" value="4"/>
</dbReference>
<dbReference type="STRING" id="3702.Q9M9A5"/>
<dbReference type="TCDB" id="1.A.87.3.5">
    <property type="family name" value="the mechanosensitive calcium channel (mca) family"/>
</dbReference>
<dbReference type="PaxDb" id="3702-AT1G49030.1"/>
<dbReference type="ProteomicsDB" id="236664"/>
<dbReference type="EnsemblPlants" id="AT1G49030.1">
    <property type="protein sequence ID" value="AT1G49030.1"/>
    <property type="gene ID" value="AT1G49030"/>
</dbReference>
<dbReference type="GeneID" id="841326"/>
<dbReference type="Gramene" id="AT1G49030.1">
    <property type="protein sequence ID" value="AT1G49030.1"/>
    <property type="gene ID" value="AT1G49030"/>
</dbReference>
<dbReference type="KEGG" id="ath:AT1G49030"/>
<dbReference type="Araport" id="AT1G49030"/>
<dbReference type="TAIR" id="AT1G49030"/>
<dbReference type="eggNOG" id="ENOG502SD9M">
    <property type="taxonomic scope" value="Eukaryota"/>
</dbReference>
<dbReference type="HOGENOM" id="CLU_077267_0_0_1"/>
<dbReference type="InParanoid" id="Q9M9A5"/>
<dbReference type="OMA" id="CEYCAFY"/>
<dbReference type="OrthoDB" id="1045822at2759"/>
<dbReference type="PhylomeDB" id="Q9M9A5"/>
<dbReference type="PRO" id="PR:Q9M9A5"/>
<dbReference type="Proteomes" id="UP000006548">
    <property type="component" value="Chromosome 1"/>
</dbReference>
<dbReference type="ExpressionAtlas" id="Q9M9A5">
    <property type="expression patterns" value="baseline and differential"/>
</dbReference>
<dbReference type="GO" id="GO:0016020">
    <property type="term" value="C:membrane"/>
    <property type="evidence" value="ECO:0007669"/>
    <property type="project" value="UniProtKB-SubCell"/>
</dbReference>
<dbReference type="InterPro" id="IPR006461">
    <property type="entry name" value="PLAC_motif_containing"/>
</dbReference>
<dbReference type="NCBIfam" id="TIGR01571">
    <property type="entry name" value="A_thal_Cys_rich"/>
    <property type="match status" value="1"/>
</dbReference>
<dbReference type="PANTHER" id="PTHR15907">
    <property type="entry name" value="DUF614 FAMILY PROTEIN-RELATED"/>
    <property type="match status" value="1"/>
</dbReference>
<dbReference type="Pfam" id="PF04749">
    <property type="entry name" value="PLAC8"/>
    <property type="match status" value="1"/>
</dbReference>
<gene>
    <name type="primary">PCR6</name>
    <name type="ordered locus">At1g49030</name>
    <name type="ORF">F27J15.18</name>
</gene>
<keyword id="KW-0472">Membrane</keyword>
<keyword id="KW-1185">Reference proteome</keyword>
<keyword id="KW-0812">Transmembrane</keyword>
<keyword id="KW-1133">Transmembrane helix</keyword>
<protein>
    <recommendedName>
        <fullName>Protein PLANT CADMIUM RESISTANCE 6</fullName>
        <shortName>AtPCR6</shortName>
    </recommendedName>
</protein>
<feature type="chain" id="PRO_0000407722" description="Protein PLANT CADMIUM RESISTANCE 6">
    <location>
        <begin position="1"/>
        <end position="224"/>
    </location>
</feature>
<feature type="transmembrane region" description="Helical" evidence="2">
    <location>
        <begin position="131"/>
        <end position="151"/>
    </location>
</feature>
<reference key="1">
    <citation type="journal article" date="2000" name="Nature">
        <title>Sequence and analysis of chromosome 1 of the plant Arabidopsis thaliana.</title>
        <authorList>
            <person name="Theologis A."/>
            <person name="Ecker J.R."/>
            <person name="Palm C.J."/>
            <person name="Federspiel N.A."/>
            <person name="Kaul S."/>
            <person name="White O."/>
            <person name="Alonso J."/>
            <person name="Altafi H."/>
            <person name="Araujo R."/>
            <person name="Bowman C.L."/>
            <person name="Brooks S.Y."/>
            <person name="Buehler E."/>
            <person name="Chan A."/>
            <person name="Chao Q."/>
            <person name="Chen H."/>
            <person name="Cheuk R.F."/>
            <person name="Chin C.W."/>
            <person name="Chung M.K."/>
            <person name="Conn L."/>
            <person name="Conway A.B."/>
            <person name="Conway A.R."/>
            <person name="Creasy T.H."/>
            <person name="Dewar K."/>
            <person name="Dunn P."/>
            <person name="Etgu P."/>
            <person name="Feldblyum T.V."/>
            <person name="Feng J.-D."/>
            <person name="Fong B."/>
            <person name="Fujii C.Y."/>
            <person name="Gill J.E."/>
            <person name="Goldsmith A.D."/>
            <person name="Haas B."/>
            <person name="Hansen N.F."/>
            <person name="Hughes B."/>
            <person name="Huizar L."/>
            <person name="Hunter J.L."/>
            <person name="Jenkins J."/>
            <person name="Johnson-Hopson C."/>
            <person name="Khan S."/>
            <person name="Khaykin E."/>
            <person name="Kim C.J."/>
            <person name="Koo H.L."/>
            <person name="Kremenetskaia I."/>
            <person name="Kurtz D.B."/>
            <person name="Kwan A."/>
            <person name="Lam B."/>
            <person name="Langin-Hooper S."/>
            <person name="Lee A."/>
            <person name="Lee J.M."/>
            <person name="Lenz C.A."/>
            <person name="Li J.H."/>
            <person name="Li Y.-P."/>
            <person name="Lin X."/>
            <person name="Liu S.X."/>
            <person name="Liu Z.A."/>
            <person name="Luros J.S."/>
            <person name="Maiti R."/>
            <person name="Marziali A."/>
            <person name="Militscher J."/>
            <person name="Miranda M."/>
            <person name="Nguyen M."/>
            <person name="Nierman W.C."/>
            <person name="Osborne B.I."/>
            <person name="Pai G."/>
            <person name="Peterson J."/>
            <person name="Pham P.K."/>
            <person name="Rizzo M."/>
            <person name="Rooney T."/>
            <person name="Rowley D."/>
            <person name="Sakano H."/>
            <person name="Salzberg S.L."/>
            <person name="Schwartz J.R."/>
            <person name="Shinn P."/>
            <person name="Southwick A.M."/>
            <person name="Sun H."/>
            <person name="Tallon L.J."/>
            <person name="Tambunga G."/>
            <person name="Toriumi M.J."/>
            <person name="Town C.D."/>
            <person name="Utterback T."/>
            <person name="Van Aken S."/>
            <person name="Vaysberg M."/>
            <person name="Vysotskaia V.S."/>
            <person name="Walker M."/>
            <person name="Wu D."/>
            <person name="Yu G."/>
            <person name="Fraser C.M."/>
            <person name="Venter J.C."/>
            <person name="Davis R.W."/>
        </authorList>
    </citation>
    <scope>NUCLEOTIDE SEQUENCE [LARGE SCALE GENOMIC DNA]</scope>
    <source>
        <strain>cv. Columbia</strain>
    </source>
</reference>
<reference key="2">
    <citation type="journal article" date="2017" name="Plant J.">
        <title>Araport11: a complete reannotation of the Arabidopsis thaliana reference genome.</title>
        <authorList>
            <person name="Cheng C.Y."/>
            <person name="Krishnakumar V."/>
            <person name="Chan A.P."/>
            <person name="Thibaud-Nissen F."/>
            <person name="Schobel S."/>
            <person name="Town C.D."/>
        </authorList>
    </citation>
    <scope>GENOME REANNOTATION</scope>
    <source>
        <strain>cv. Columbia</strain>
    </source>
</reference>
<reference key="3">
    <citation type="submission" date="2004-02" db="EMBL/GenBank/DDBJ databases">
        <title>Arabidopsis ORF clones.</title>
        <authorList>
            <person name="Kim C.J."/>
            <person name="Chen H."/>
            <person name="Cheuk R."/>
            <person name="Shinn P."/>
            <person name="Ecker J.R."/>
        </authorList>
    </citation>
    <scope>NUCLEOTIDE SEQUENCE [LARGE SCALE MRNA]</scope>
    <source>
        <strain>cv. Columbia</strain>
    </source>
</reference>
<reference key="4">
    <citation type="journal article" date="2004" name="Plant Physiol.">
        <title>A novel family of cys-rich membrane proteins mediates cadmium resistance in Arabidopsis.</title>
        <authorList>
            <person name="Song W.Y."/>
            <person name="Martinoia E."/>
            <person name="Lee J."/>
            <person name="Kim D."/>
            <person name="Kim D.Y."/>
            <person name="Vogt E."/>
            <person name="Shim D."/>
            <person name="Choi K.S."/>
            <person name="Hwang I."/>
            <person name="Lee Y."/>
        </authorList>
    </citation>
    <scope>GENE FAMILY</scope>
    <scope>NOMENCLATURE</scope>
</reference>
<comment type="function">
    <text evidence="1">May be involved in heavy metals transport.</text>
</comment>
<comment type="subcellular location">
    <subcellularLocation>
        <location evidence="3">Membrane</location>
        <topology evidence="3">Single-pass membrane protein</topology>
    </subcellularLocation>
</comment>
<comment type="similarity">
    <text evidence="3">Belongs to the cornifelin family.</text>
</comment>
<accession>Q9M9A5</accession>
<name>PCR6_ARATH</name>
<proteinExistence type="evidence at transcript level"/>
<sequence>MGRPDQTPSPRMNNNFNPVFHAQSEQPVDEKRVLQAEQIYPNNGGVVNQPNQVPMRPGPPTYINQSATFNQPYGVSMAGPVHTQPSNWTSGLFDCMNDGENALITCCFPFVTFGQIAEVIDEGATSCGTAGMLYGLICCLFAIPCVYTCTFRTKLRSKYGLPDAPAPDWITHCFCEYCALCQEYRELKNRGLDPSIGWIGNVQKQRMGQQQEMMAPPMGQRMMG</sequence>
<organism>
    <name type="scientific">Arabidopsis thaliana</name>
    <name type="common">Mouse-ear cress</name>
    <dbReference type="NCBI Taxonomy" id="3702"/>
    <lineage>
        <taxon>Eukaryota</taxon>
        <taxon>Viridiplantae</taxon>
        <taxon>Streptophyta</taxon>
        <taxon>Embryophyta</taxon>
        <taxon>Tracheophyta</taxon>
        <taxon>Spermatophyta</taxon>
        <taxon>Magnoliopsida</taxon>
        <taxon>eudicotyledons</taxon>
        <taxon>Gunneridae</taxon>
        <taxon>Pentapetalae</taxon>
        <taxon>rosids</taxon>
        <taxon>malvids</taxon>
        <taxon>Brassicales</taxon>
        <taxon>Brassicaceae</taxon>
        <taxon>Camelineae</taxon>
        <taxon>Arabidopsis</taxon>
    </lineage>
</organism>
<evidence type="ECO:0000250" key="1"/>
<evidence type="ECO:0000255" key="2"/>
<evidence type="ECO:0000305" key="3"/>